<accession>A5E8A4</accession>
<gene>
    <name evidence="1" type="primary">trpB</name>
    <name type="ordered locus">BBta_0097</name>
</gene>
<keyword id="KW-0028">Amino-acid biosynthesis</keyword>
<keyword id="KW-0057">Aromatic amino acid biosynthesis</keyword>
<keyword id="KW-0456">Lyase</keyword>
<keyword id="KW-0663">Pyridoxal phosphate</keyword>
<keyword id="KW-1185">Reference proteome</keyword>
<keyword id="KW-0822">Tryptophan biosynthesis</keyword>
<comment type="function">
    <text evidence="1">The beta subunit is responsible for the synthesis of L-tryptophan from indole and L-serine.</text>
</comment>
<comment type="catalytic activity">
    <reaction evidence="1">
        <text>(1S,2R)-1-C-(indol-3-yl)glycerol 3-phosphate + L-serine = D-glyceraldehyde 3-phosphate + L-tryptophan + H2O</text>
        <dbReference type="Rhea" id="RHEA:10532"/>
        <dbReference type="ChEBI" id="CHEBI:15377"/>
        <dbReference type="ChEBI" id="CHEBI:33384"/>
        <dbReference type="ChEBI" id="CHEBI:57912"/>
        <dbReference type="ChEBI" id="CHEBI:58866"/>
        <dbReference type="ChEBI" id="CHEBI:59776"/>
        <dbReference type="EC" id="4.2.1.20"/>
    </reaction>
</comment>
<comment type="cofactor">
    <cofactor evidence="1">
        <name>pyridoxal 5'-phosphate</name>
        <dbReference type="ChEBI" id="CHEBI:597326"/>
    </cofactor>
</comment>
<comment type="pathway">
    <text evidence="1">Amino-acid biosynthesis; L-tryptophan biosynthesis; L-tryptophan from chorismate: step 5/5.</text>
</comment>
<comment type="subunit">
    <text evidence="1">Tetramer of two alpha and two beta chains.</text>
</comment>
<comment type="similarity">
    <text evidence="1">Belongs to the TrpB family.</text>
</comment>
<reference key="1">
    <citation type="journal article" date="2007" name="Science">
        <title>Legumes symbioses: absence of nod genes in photosynthetic bradyrhizobia.</title>
        <authorList>
            <person name="Giraud E."/>
            <person name="Moulin L."/>
            <person name="Vallenet D."/>
            <person name="Barbe V."/>
            <person name="Cytryn E."/>
            <person name="Avarre J.-C."/>
            <person name="Jaubert M."/>
            <person name="Simon D."/>
            <person name="Cartieaux F."/>
            <person name="Prin Y."/>
            <person name="Bena G."/>
            <person name="Hannibal L."/>
            <person name="Fardoux J."/>
            <person name="Kojadinovic M."/>
            <person name="Vuillet L."/>
            <person name="Lajus A."/>
            <person name="Cruveiller S."/>
            <person name="Rouy Z."/>
            <person name="Mangenot S."/>
            <person name="Segurens B."/>
            <person name="Dossat C."/>
            <person name="Franck W.L."/>
            <person name="Chang W.-S."/>
            <person name="Saunders E."/>
            <person name="Bruce D."/>
            <person name="Richardson P."/>
            <person name="Normand P."/>
            <person name="Dreyfus B."/>
            <person name="Pignol D."/>
            <person name="Stacey G."/>
            <person name="Emerich D."/>
            <person name="Vermeglio A."/>
            <person name="Medigue C."/>
            <person name="Sadowsky M."/>
        </authorList>
    </citation>
    <scope>NUCLEOTIDE SEQUENCE [LARGE SCALE GENOMIC DNA]</scope>
    <source>
        <strain>BTAi1 / ATCC BAA-1182</strain>
    </source>
</reference>
<protein>
    <recommendedName>
        <fullName evidence="1">Tryptophan synthase beta chain</fullName>
        <ecNumber evidence="1">4.2.1.20</ecNumber>
    </recommendedName>
</protein>
<proteinExistence type="inferred from homology"/>
<dbReference type="EC" id="4.2.1.20" evidence="1"/>
<dbReference type="EMBL" id="CP000494">
    <property type="protein sequence ID" value="ABQ32398.1"/>
    <property type="molecule type" value="Genomic_DNA"/>
</dbReference>
<dbReference type="RefSeq" id="WP_011942621.1">
    <property type="nucleotide sequence ID" value="NC_009485.1"/>
</dbReference>
<dbReference type="SMR" id="A5E8A4"/>
<dbReference type="STRING" id="288000.BBta_0097"/>
<dbReference type="KEGG" id="bbt:BBta_0097"/>
<dbReference type="eggNOG" id="COG0133">
    <property type="taxonomic scope" value="Bacteria"/>
</dbReference>
<dbReference type="HOGENOM" id="CLU_016734_3_1_5"/>
<dbReference type="OrthoDB" id="9766131at2"/>
<dbReference type="UniPathway" id="UPA00035">
    <property type="reaction ID" value="UER00044"/>
</dbReference>
<dbReference type="Proteomes" id="UP000000246">
    <property type="component" value="Chromosome"/>
</dbReference>
<dbReference type="GO" id="GO:0005737">
    <property type="term" value="C:cytoplasm"/>
    <property type="evidence" value="ECO:0007669"/>
    <property type="project" value="TreeGrafter"/>
</dbReference>
<dbReference type="GO" id="GO:0004834">
    <property type="term" value="F:tryptophan synthase activity"/>
    <property type="evidence" value="ECO:0007669"/>
    <property type="project" value="UniProtKB-UniRule"/>
</dbReference>
<dbReference type="CDD" id="cd06446">
    <property type="entry name" value="Trp-synth_B"/>
    <property type="match status" value="1"/>
</dbReference>
<dbReference type="FunFam" id="3.40.50.1100:FF:000001">
    <property type="entry name" value="Tryptophan synthase beta chain"/>
    <property type="match status" value="1"/>
</dbReference>
<dbReference type="FunFam" id="3.40.50.1100:FF:000004">
    <property type="entry name" value="Tryptophan synthase beta chain"/>
    <property type="match status" value="1"/>
</dbReference>
<dbReference type="Gene3D" id="3.40.50.1100">
    <property type="match status" value="2"/>
</dbReference>
<dbReference type="HAMAP" id="MF_00133">
    <property type="entry name" value="Trp_synth_beta"/>
    <property type="match status" value="1"/>
</dbReference>
<dbReference type="InterPro" id="IPR006653">
    <property type="entry name" value="Trp_synth_b_CS"/>
</dbReference>
<dbReference type="InterPro" id="IPR006654">
    <property type="entry name" value="Trp_synth_beta"/>
</dbReference>
<dbReference type="InterPro" id="IPR023026">
    <property type="entry name" value="Trp_synth_beta/beta-like"/>
</dbReference>
<dbReference type="InterPro" id="IPR001926">
    <property type="entry name" value="TrpB-like_PALP"/>
</dbReference>
<dbReference type="InterPro" id="IPR036052">
    <property type="entry name" value="TrpB-like_PALP_sf"/>
</dbReference>
<dbReference type="NCBIfam" id="TIGR00263">
    <property type="entry name" value="trpB"/>
    <property type="match status" value="1"/>
</dbReference>
<dbReference type="PANTHER" id="PTHR48077:SF3">
    <property type="entry name" value="TRYPTOPHAN SYNTHASE"/>
    <property type="match status" value="1"/>
</dbReference>
<dbReference type="PANTHER" id="PTHR48077">
    <property type="entry name" value="TRYPTOPHAN SYNTHASE-RELATED"/>
    <property type="match status" value="1"/>
</dbReference>
<dbReference type="Pfam" id="PF00291">
    <property type="entry name" value="PALP"/>
    <property type="match status" value="1"/>
</dbReference>
<dbReference type="PIRSF" id="PIRSF001413">
    <property type="entry name" value="Trp_syn_beta"/>
    <property type="match status" value="1"/>
</dbReference>
<dbReference type="SUPFAM" id="SSF53686">
    <property type="entry name" value="Tryptophan synthase beta subunit-like PLP-dependent enzymes"/>
    <property type="match status" value="1"/>
</dbReference>
<dbReference type="PROSITE" id="PS00168">
    <property type="entry name" value="TRP_SYNTHASE_BETA"/>
    <property type="match status" value="1"/>
</dbReference>
<organism>
    <name type="scientific">Bradyrhizobium sp. (strain BTAi1 / ATCC BAA-1182)</name>
    <dbReference type="NCBI Taxonomy" id="288000"/>
    <lineage>
        <taxon>Bacteria</taxon>
        <taxon>Pseudomonadati</taxon>
        <taxon>Pseudomonadota</taxon>
        <taxon>Alphaproteobacteria</taxon>
        <taxon>Hyphomicrobiales</taxon>
        <taxon>Nitrobacteraceae</taxon>
        <taxon>Bradyrhizobium</taxon>
    </lineage>
</organism>
<name>TRPB_BRASB</name>
<evidence type="ECO:0000255" key="1">
    <source>
        <dbReference type="HAMAP-Rule" id="MF_00133"/>
    </source>
</evidence>
<feature type="chain" id="PRO_1000018327" description="Tryptophan synthase beta chain">
    <location>
        <begin position="1"/>
        <end position="407"/>
    </location>
</feature>
<feature type="modified residue" description="N6-(pyridoxal phosphate)lysine" evidence="1">
    <location>
        <position position="98"/>
    </location>
</feature>
<sequence length="407" mass="44442">MTTARPNSYRSGPDERGHFGIFGGRFVAETLMPLILDLEKAYADAKADPAFQAEMNSYRTHYVGRPSPLYYAERLTQHLGGAKIYFKRDELNHTGSHKVNNVLGQIMLARRMGKRRIIAETGAGQHGVATATLCARFGLDCVVYMGAVDVERQQPNVLRMEMLGAKVVPVQSGARTLKDAMNEALRDWVTNVHDTFYCIGTVAGPHPYPMMVRDFQSVIGDETRVQMQEAEGRLPDSLVACIGGGSNAMGLFHPFLDDPSVEIFGVEAAGHGLTQLHAASIAGGRPGVLHGNRTYLLMDEDGQIAEAHSISAGLDYPGIGPEHSWLFEAKRVTYLSATDDEALAAFQLLSRLEGIIPALEPAHAIAKVMELAPKKPKEHLMVVNLCGRGDKDVPQVGEILRKRAKES</sequence>